<sequence length="628" mass="69932">MTRRGGSDAAWYSAPDQRSAYPRYRGMRYSSCYVTMRDGVRIAIDLYLPAGLTSAARLPAILHQTRYYRSLQLRWPLRMLLGGKPLQHIAADKRRRRRFVASGYAWVDVDVRGSGASFGARVCEWSSDEIRDGAEIVDWIVRQPWCNGTVAALGNSYDGTSAELLLVNQHPAVRVIAPCFSLFDVYTDIAFPGGIHAAWFTDTWGRYNEALDRNALHEVVGWWAKLPVTGMQPVQEDRDRSLRDGAIAAHRGNYDVHQIAGSLTFRDDVSASDPYRGQPDARLEPIGTPIESGSINLISPHNYWRDVQASGAAIYSYSGWFDGGYAHAAIKRFLTVSTPGSHLILGPWNHTGGWRVDPLRGLSRPDFDHDGELLRFIDHHVKGADTGIGSEPPVHYFTMVENRWKSADTWPPPATTQSYYLSADRQLRPDAPDCDSGADEYVVDQTAGTGERSRWRSQVGIGGHVCYPDRKAQDAKLLTYTSAPLDHPLEVTGHVVVTLFITSTSSDGTFFVYLEDVDPRGRVAYITEGQLRAIHRRLSDGPPPYRQVVPYRTFASGDAWPLVPGEIARLTFDLLPTSYLFQPGHRIRIAIAGADASHFAILPGCAPTVRVYRSRMHASRIDLPVIQP</sequence>
<reference key="1">
    <citation type="journal article" date="2003" name="Proc. Natl. Acad. Sci. U.S.A.">
        <title>The complete genome sequence of Mycobacterium bovis.</title>
        <authorList>
            <person name="Garnier T."/>
            <person name="Eiglmeier K."/>
            <person name="Camus J.-C."/>
            <person name="Medina N."/>
            <person name="Mansoor H."/>
            <person name="Pryor M."/>
            <person name="Duthoy S."/>
            <person name="Grondin S."/>
            <person name="Lacroix C."/>
            <person name="Monsempe C."/>
            <person name="Simon S."/>
            <person name="Harris B."/>
            <person name="Atkin R."/>
            <person name="Doggett J."/>
            <person name="Mayes R."/>
            <person name="Keating L."/>
            <person name="Wheeler P.R."/>
            <person name="Parkhill J."/>
            <person name="Barrell B.G."/>
            <person name="Cole S.T."/>
            <person name="Gordon S.V."/>
            <person name="Hewinson R.G."/>
        </authorList>
    </citation>
    <scope>NUCLEOTIDE SEQUENCE [LARGE SCALE GENOMIC DNA]</scope>
    <source>
        <strain>ATCC BAA-935 / AF2122/97</strain>
    </source>
</reference>
<reference key="2">
    <citation type="journal article" date="2017" name="Genome Announc.">
        <title>Updated reference genome sequence and annotation of Mycobacterium bovis AF2122/97.</title>
        <authorList>
            <person name="Malone K.M."/>
            <person name="Farrell D."/>
            <person name="Stuber T.P."/>
            <person name="Schubert O.T."/>
            <person name="Aebersold R."/>
            <person name="Robbe-Austerman S."/>
            <person name="Gordon S.V."/>
        </authorList>
    </citation>
    <scope>NUCLEOTIDE SEQUENCE [LARGE SCALE GENOMIC DNA]</scope>
    <scope>GENOME REANNOTATION</scope>
    <source>
        <strain>ATCC BAA-935 / AF2122/97</strain>
    </source>
</reference>
<feature type="chain" id="PRO_0000103909" description="Putative serine esterase Mb1866c">
    <location>
        <begin position="1"/>
        <end position="628"/>
    </location>
</feature>
<feature type="active site" description="Acyl-ester intermediate" evidence="1">
    <location>
        <position position="156"/>
    </location>
</feature>
<feature type="active site" description="Charge relay system" evidence="1">
    <location>
        <position position="322"/>
    </location>
</feature>
<feature type="active site" description="Charge relay system" evidence="1">
    <location>
        <position position="350"/>
    </location>
</feature>
<protein>
    <recommendedName>
        <fullName>Putative serine esterase Mb1866c</fullName>
        <ecNumber>3.1.1.-</ecNumber>
    </recommendedName>
</protein>
<accession>P0A5F6</accession>
<accession>A0A1R3XZG7</accession>
<accession>Q50598</accession>
<accession>X2BJC0</accession>
<evidence type="ECO:0000250" key="1"/>
<evidence type="ECO:0000305" key="2"/>
<dbReference type="EC" id="3.1.1.-"/>
<dbReference type="EMBL" id="LT708304">
    <property type="protein sequence ID" value="SIU00470.1"/>
    <property type="molecule type" value="Genomic_DNA"/>
</dbReference>
<dbReference type="RefSeq" id="NP_855518.1">
    <property type="nucleotide sequence ID" value="NC_002945.3"/>
</dbReference>
<dbReference type="RefSeq" id="WP_003409258.1">
    <property type="nucleotide sequence ID" value="NC_002945.4"/>
</dbReference>
<dbReference type="SMR" id="P0A5F6"/>
<dbReference type="ESTHER" id="myctu-y1835">
    <property type="family name" value="Cocaine_esterase"/>
</dbReference>
<dbReference type="KEGG" id="mbo:BQ2027_MB1866C"/>
<dbReference type="PATRIC" id="fig|233413.5.peg.2046"/>
<dbReference type="Proteomes" id="UP000001419">
    <property type="component" value="Chromosome"/>
</dbReference>
<dbReference type="GO" id="GO:0052689">
    <property type="term" value="F:carboxylic ester hydrolase activity"/>
    <property type="evidence" value="ECO:0007669"/>
    <property type="project" value="UniProtKB-KW"/>
</dbReference>
<dbReference type="GO" id="GO:0008239">
    <property type="term" value="F:dipeptidyl-peptidase activity"/>
    <property type="evidence" value="ECO:0007669"/>
    <property type="project" value="InterPro"/>
</dbReference>
<dbReference type="Gene3D" id="3.40.50.1820">
    <property type="entry name" value="alpha/beta hydrolase"/>
    <property type="match status" value="2"/>
</dbReference>
<dbReference type="Gene3D" id="2.60.120.260">
    <property type="entry name" value="Galactose-binding domain-like"/>
    <property type="match status" value="1"/>
</dbReference>
<dbReference type="InterPro" id="IPR029058">
    <property type="entry name" value="AB_hydrolase_fold"/>
</dbReference>
<dbReference type="InterPro" id="IPR005674">
    <property type="entry name" value="CocE/Ser_esterase"/>
</dbReference>
<dbReference type="InterPro" id="IPR008979">
    <property type="entry name" value="Galactose-bd-like_sf"/>
</dbReference>
<dbReference type="InterPro" id="IPR000383">
    <property type="entry name" value="Xaa-Pro-like_dom"/>
</dbReference>
<dbReference type="InterPro" id="IPR013736">
    <property type="entry name" value="Xaa-Pro_dipept_C"/>
</dbReference>
<dbReference type="InterPro" id="IPR050585">
    <property type="entry name" value="Xaa-Pro_dipeptidyl-ppase/CocE"/>
</dbReference>
<dbReference type="NCBIfam" id="TIGR00976">
    <property type="entry name" value="CocE_NonD"/>
    <property type="match status" value="1"/>
</dbReference>
<dbReference type="PANTHER" id="PTHR43056:SF10">
    <property type="entry name" value="COCE_NOND FAMILY, PUTATIVE (AFU_ORTHOLOGUE AFUA_7G00600)-RELATED"/>
    <property type="match status" value="1"/>
</dbReference>
<dbReference type="PANTHER" id="PTHR43056">
    <property type="entry name" value="PEPTIDASE S9 PROLYL OLIGOPEPTIDASE"/>
    <property type="match status" value="1"/>
</dbReference>
<dbReference type="Pfam" id="PF02129">
    <property type="entry name" value="Peptidase_S15"/>
    <property type="match status" value="1"/>
</dbReference>
<dbReference type="Pfam" id="PF08530">
    <property type="entry name" value="PepX_C"/>
    <property type="match status" value="1"/>
</dbReference>
<dbReference type="SMART" id="SM00939">
    <property type="entry name" value="PepX_C"/>
    <property type="match status" value="1"/>
</dbReference>
<dbReference type="SUPFAM" id="SSF53474">
    <property type="entry name" value="alpha/beta-Hydrolases"/>
    <property type="match status" value="1"/>
</dbReference>
<dbReference type="SUPFAM" id="SSF49785">
    <property type="entry name" value="Galactose-binding domain-like"/>
    <property type="match status" value="1"/>
</dbReference>
<keyword id="KW-0378">Hydrolase</keyword>
<keyword id="KW-1185">Reference proteome</keyword>
<keyword id="KW-0719">Serine esterase</keyword>
<organism>
    <name type="scientific">Mycobacterium bovis (strain ATCC BAA-935 / AF2122/97)</name>
    <dbReference type="NCBI Taxonomy" id="233413"/>
    <lineage>
        <taxon>Bacteria</taxon>
        <taxon>Bacillati</taxon>
        <taxon>Actinomycetota</taxon>
        <taxon>Actinomycetes</taxon>
        <taxon>Mycobacteriales</taxon>
        <taxon>Mycobacteriaceae</taxon>
        <taxon>Mycobacterium</taxon>
        <taxon>Mycobacterium tuberculosis complex</taxon>
    </lineage>
</organism>
<comment type="similarity">
    <text evidence="2">Belongs to the CocE/NonD hydrolase family.</text>
</comment>
<name>Y1866_MYCBO</name>
<proteinExistence type="inferred from homology"/>
<gene>
    <name type="ordered locus">BQ2027_MB1866C</name>
</gene>